<accession>A0K9T5</accession>
<feature type="chain" id="PRO_1000022046" description="Isoleucine--tRNA ligase">
    <location>
        <begin position="1"/>
        <end position="945"/>
    </location>
</feature>
<feature type="short sequence motif" description="'HIGH' region">
    <location>
        <begin position="66"/>
        <end position="76"/>
    </location>
</feature>
<feature type="short sequence motif" description="'KMSKS' region">
    <location>
        <begin position="622"/>
        <end position="626"/>
    </location>
</feature>
<feature type="binding site" evidence="1">
    <location>
        <position position="581"/>
    </location>
    <ligand>
        <name>L-isoleucyl-5'-AMP</name>
        <dbReference type="ChEBI" id="CHEBI:178002"/>
    </ligand>
</feature>
<feature type="binding site" evidence="1">
    <location>
        <position position="625"/>
    </location>
    <ligand>
        <name>ATP</name>
        <dbReference type="ChEBI" id="CHEBI:30616"/>
    </ligand>
</feature>
<feature type="binding site" evidence="1">
    <location>
        <position position="908"/>
    </location>
    <ligand>
        <name>Zn(2+)</name>
        <dbReference type="ChEBI" id="CHEBI:29105"/>
    </ligand>
</feature>
<feature type="binding site" evidence="1">
    <location>
        <position position="911"/>
    </location>
    <ligand>
        <name>Zn(2+)</name>
        <dbReference type="ChEBI" id="CHEBI:29105"/>
    </ligand>
</feature>
<feature type="binding site" evidence="1">
    <location>
        <position position="928"/>
    </location>
    <ligand>
        <name>Zn(2+)</name>
        <dbReference type="ChEBI" id="CHEBI:29105"/>
    </ligand>
</feature>
<feature type="binding site" evidence="1">
    <location>
        <position position="931"/>
    </location>
    <ligand>
        <name>Zn(2+)</name>
        <dbReference type="ChEBI" id="CHEBI:29105"/>
    </ligand>
</feature>
<comment type="function">
    <text evidence="1">Catalyzes the attachment of isoleucine to tRNA(Ile). As IleRS can inadvertently accommodate and process structurally similar amino acids such as valine, to avoid such errors it has two additional distinct tRNA(Ile)-dependent editing activities. One activity is designated as 'pretransfer' editing and involves the hydrolysis of activated Val-AMP. The other activity is designated 'posttransfer' editing and involves deacylation of mischarged Val-tRNA(Ile).</text>
</comment>
<comment type="catalytic activity">
    <reaction evidence="1">
        <text>tRNA(Ile) + L-isoleucine + ATP = L-isoleucyl-tRNA(Ile) + AMP + diphosphate</text>
        <dbReference type="Rhea" id="RHEA:11060"/>
        <dbReference type="Rhea" id="RHEA-COMP:9666"/>
        <dbReference type="Rhea" id="RHEA-COMP:9695"/>
        <dbReference type="ChEBI" id="CHEBI:30616"/>
        <dbReference type="ChEBI" id="CHEBI:33019"/>
        <dbReference type="ChEBI" id="CHEBI:58045"/>
        <dbReference type="ChEBI" id="CHEBI:78442"/>
        <dbReference type="ChEBI" id="CHEBI:78528"/>
        <dbReference type="ChEBI" id="CHEBI:456215"/>
        <dbReference type="EC" id="6.1.1.5"/>
    </reaction>
</comment>
<comment type="cofactor">
    <cofactor evidence="1">
        <name>Zn(2+)</name>
        <dbReference type="ChEBI" id="CHEBI:29105"/>
    </cofactor>
    <text evidence="1">Binds 1 zinc ion per subunit.</text>
</comment>
<comment type="subunit">
    <text evidence="1">Monomer.</text>
</comment>
<comment type="subcellular location">
    <subcellularLocation>
        <location evidence="1">Cytoplasm</location>
    </subcellularLocation>
</comment>
<comment type="domain">
    <text evidence="1">IleRS has two distinct active sites: one for aminoacylation and one for editing. The misactivated valine is translocated from the active site to the editing site, which sterically excludes the correctly activated isoleucine. The single editing site contains two valyl binding pockets, one specific for each substrate (Val-AMP or Val-tRNA(Ile)).</text>
</comment>
<comment type="similarity">
    <text evidence="1">Belongs to the class-I aminoacyl-tRNA synthetase family. IleS type 1 subfamily.</text>
</comment>
<protein>
    <recommendedName>
        <fullName evidence="1">Isoleucine--tRNA ligase</fullName>
        <ecNumber evidence="1">6.1.1.5</ecNumber>
    </recommendedName>
    <alternativeName>
        <fullName evidence="1">Isoleucyl-tRNA synthetase</fullName>
        <shortName evidence="1">IleRS</shortName>
    </alternativeName>
</protein>
<proteinExistence type="inferred from homology"/>
<keyword id="KW-0030">Aminoacyl-tRNA synthetase</keyword>
<keyword id="KW-0067">ATP-binding</keyword>
<keyword id="KW-0963">Cytoplasm</keyword>
<keyword id="KW-0436">Ligase</keyword>
<keyword id="KW-0479">Metal-binding</keyword>
<keyword id="KW-0547">Nucleotide-binding</keyword>
<keyword id="KW-0648">Protein biosynthesis</keyword>
<keyword id="KW-0862">Zinc</keyword>
<name>SYI_BURCH</name>
<evidence type="ECO:0000255" key="1">
    <source>
        <dbReference type="HAMAP-Rule" id="MF_02002"/>
    </source>
</evidence>
<dbReference type="EC" id="6.1.1.5" evidence="1"/>
<dbReference type="EMBL" id="CP000458">
    <property type="protein sequence ID" value="ABK09262.1"/>
    <property type="molecule type" value="Genomic_DNA"/>
</dbReference>
<dbReference type="RefSeq" id="WP_011546014.1">
    <property type="nucleotide sequence ID" value="NC_008542.1"/>
</dbReference>
<dbReference type="SMR" id="A0K9T5"/>
<dbReference type="KEGG" id="bch:Bcen2424_2512"/>
<dbReference type="HOGENOM" id="CLU_001493_7_1_4"/>
<dbReference type="GO" id="GO:0005829">
    <property type="term" value="C:cytosol"/>
    <property type="evidence" value="ECO:0007669"/>
    <property type="project" value="TreeGrafter"/>
</dbReference>
<dbReference type="GO" id="GO:0002161">
    <property type="term" value="F:aminoacyl-tRNA deacylase activity"/>
    <property type="evidence" value="ECO:0007669"/>
    <property type="project" value="InterPro"/>
</dbReference>
<dbReference type="GO" id="GO:0005524">
    <property type="term" value="F:ATP binding"/>
    <property type="evidence" value="ECO:0007669"/>
    <property type="project" value="UniProtKB-UniRule"/>
</dbReference>
<dbReference type="GO" id="GO:0004822">
    <property type="term" value="F:isoleucine-tRNA ligase activity"/>
    <property type="evidence" value="ECO:0007669"/>
    <property type="project" value="UniProtKB-UniRule"/>
</dbReference>
<dbReference type="GO" id="GO:0000049">
    <property type="term" value="F:tRNA binding"/>
    <property type="evidence" value="ECO:0007669"/>
    <property type="project" value="InterPro"/>
</dbReference>
<dbReference type="GO" id="GO:0008270">
    <property type="term" value="F:zinc ion binding"/>
    <property type="evidence" value="ECO:0007669"/>
    <property type="project" value="UniProtKB-UniRule"/>
</dbReference>
<dbReference type="GO" id="GO:0006428">
    <property type="term" value="P:isoleucyl-tRNA aminoacylation"/>
    <property type="evidence" value="ECO:0007669"/>
    <property type="project" value="UniProtKB-UniRule"/>
</dbReference>
<dbReference type="CDD" id="cd07960">
    <property type="entry name" value="Anticodon_Ia_Ile_BEm"/>
    <property type="match status" value="1"/>
</dbReference>
<dbReference type="CDD" id="cd00818">
    <property type="entry name" value="IleRS_core"/>
    <property type="match status" value="1"/>
</dbReference>
<dbReference type="FunFam" id="1.10.730.20:FF:000001">
    <property type="entry name" value="Isoleucine--tRNA ligase"/>
    <property type="match status" value="1"/>
</dbReference>
<dbReference type="FunFam" id="3.40.50.620:FF:000042">
    <property type="entry name" value="Isoleucine--tRNA ligase"/>
    <property type="match status" value="1"/>
</dbReference>
<dbReference type="FunFam" id="3.40.50.620:FF:000048">
    <property type="entry name" value="Isoleucine--tRNA ligase"/>
    <property type="match status" value="1"/>
</dbReference>
<dbReference type="Gene3D" id="1.10.730.20">
    <property type="match status" value="1"/>
</dbReference>
<dbReference type="Gene3D" id="3.40.50.620">
    <property type="entry name" value="HUPs"/>
    <property type="match status" value="2"/>
</dbReference>
<dbReference type="Gene3D" id="3.90.740.10">
    <property type="entry name" value="Valyl/Leucyl/Isoleucyl-tRNA synthetase, editing domain"/>
    <property type="match status" value="1"/>
</dbReference>
<dbReference type="HAMAP" id="MF_02002">
    <property type="entry name" value="Ile_tRNA_synth_type1"/>
    <property type="match status" value="1"/>
</dbReference>
<dbReference type="InterPro" id="IPR001412">
    <property type="entry name" value="aa-tRNA-synth_I_CS"/>
</dbReference>
<dbReference type="InterPro" id="IPR002300">
    <property type="entry name" value="aa-tRNA-synth_Ia"/>
</dbReference>
<dbReference type="InterPro" id="IPR033708">
    <property type="entry name" value="Anticodon_Ile_BEm"/>
</dbReference>
<dbReference type="InterPro" id="IPR002301">
    <property type="entry name" value="Ile-tRNA-ligase"/>
</dbReference>
<dbReference type="InterPro" id="IPR023585">
    <property type="entry name" value="Ile-tRNA-ligase_type1"/>
</dbReference>
<dbReference type="InterPro" id="IPR050081">
    <property type="entry name" value="Ile-tRNA_ligase"/>
</dbReference>
<dbReference type="InterPro" id="IPR013155">
    <property type="entry name" value="M/V/L/I-tRNA-synth_anticd-bd"/>
</dbReference>
<dbReference type="InterPro" id="IPR014729">
    <property type="entry name" value="Rossmann-like_a/b/a_fold"/>
</dbReference>
<dbReference type="InterPro" id="IPR009080">
    <property type="entry name" value="tRNAsynth_Ia_anticodon-bd"/>
</dbReference>
<dbReference type="InterPro" id="IPR009008">
    <property type="entry name" value="Val/Leu/Ile-tRNA-synth_edit"/>
</dbReference>
<dbReference type="InterPro" id="IPR010663">
    <property type="entry name" value="Znf_FPG/IleRS"/>
</dbReference>
<dbReference type="NCBIfam" id="TIGR00392">
    <property type="entry name" value="ileS"/>
    <property type="match status" value="1"/>
</dbReference>
<dbReference type="PANTHER" id="PTHR42765:SF1">
    <property type="entry name" value="ISOLEUCINE--TRNA LIGASE, MITOCHONDRIAL"/>
    <property type="match status" value="1"/>
</dbReference>
<dbReference type="PANTHER" id="PTHR42765">
    <property type="entry name" value="SOLEUCYL-TRNA SYNTHETASE"/>
    <property type="match status" value="1"/>
</dbReference>
<dbReference type="Pfam" id="PF08264">
    <property type="entry name" value="Anticodon_1"/>
    <property type="match status" value="1"/>
</dbReference>
<dbReference type="Pfam" id="PF00133">
    <property type="entry name" value="tRNA-synt_1"/>
    <property type="match status" value="1"/>
</dbReference>
<dbReference type="Pfam" id="PF06827">
    <property type="entry name" value="zf-FPG_IleRS"/>
    <property type="match status" value="1"/>
</dbReference>
<dbReference type="PRINTS" id="PR00984">
    <property type="entry name" value="TRNASYNTHILE"/>
</dbReference>
<dbReference type="SUPFAM" id="SSF47323">
    <property type="entry name" value="Anticodon-binding domain of a subclass of class I aminoacyl-tRNA synthetases"/>
    <property type="match status" value="1"/>
</dbReference>
<dbReference type="SUPFAM" id="SSF52374">
    <property type="entry name" value="Nucleotidylyl transferase"/>
    <property type="match status" value="1"/>
</dbReference>
<dbReference type="SUPFAM" id="SSF50677">
    <property type="entry name" value="ValRS/IleRS/LeuRS editing domain"/>
    <property type="match status" value="1"/>
</dbReference>
<dbReference type="PROSITE" id="PS00178">
    <property type="entry name" value="AA_TRNA_LIGASE_I"/>
    <property type="match status" value="1"/>
</dbReference>
<gene>
    <name evidence="1" type="primary">ileS</name>
    <name type="ordered locus">Bcen2424_2512</name>
</gene>
<sequence>MSNKKADSKPQAKYPVNLLDTPFPMRGDLPKREPQWVKEWEARGIYEKIRAASQGRPKFILHDGPPYANGDIHLGHAVNKILKDIVVKSRNMAGFDAPYVPGWDCHGMPIEIQIEKQFGKSLPAAEVMSKARAYATEQIEKQKVGFKRLGVLGDWANPYKTMNFVNEAEEIRALGKIIEKGYVYRGLKPVNWCFDCGSALAEAEVEYKDRTDPTIDVMFAFAEPEKTAHAFGLPALPRAEGGIVIWTTTPWTIPANQALNLHPEIIYALVDTERGLLIIAEERVEACMTDFKLTGRVVATAPGVKLANLRFHHPLASAHPGYKRTAPVYLGDYVTTDTGTGVVHSSPAYGIEDFMSCKAHGMTDSDFINPVMGDGRYIESLPLFGGLSIWDANPKIVDALNAAGSLLRSEKYTHSYMHCWRHKTPIIYRATSQWFAGMDVTPQDGGKTLRETALEGVDATAFYPSWGKQRLFSMIANRPDWTLSRQRQWGVPMAFFVHKETGELHPRTLELLEEVAKRVEQSGIEAWQSLDPRELIGDDANLYEKNRDTLDVWFDSGTTHWHVLRGSHKDQLQFPADLYLEGSDQHRGWFHSSLLTASMIDGRAPYKGLLTHGFTVDGEGRKMSKSLGNGIDPHEVANRLGAEIIRLWIASTDYSGELAISEEILKRVTEGYRRIRNTLRFLLANLSDFDFAQHAVPVDEWLEIDRYAVAFSQQLQTELLGHYEKYEFHPVVAKLQTYCSEDLGGFYLDVLKDRLYTSAADSRARRSAQTALYHLTHGLLRVLAPFLSFTAEEAWKVFQPASDTIFTETYYAYPEVAGSAALIEKWALLRDVRGSVTKALEEARTANRIGSSLQAEVAVHASGARYDALTSLGDDLKFVLITSAATVVKVDDEAQESVDVAASKYQKCERCWHYREDVGAHAEHPTLCGRCFSNLFENGEIRSAA</sequence>
<reference key="1">
    <citation type="submission" date="2006-08" db="EMBL/GenBank/DDBJ databases">
        <title>Complete sequence of chromosome 1 of Burkholderia cenocepacia HI2424.</title>
        <authorList>
            <person name="Copeland A."/>
            <person name="Lucas S."/>
            <person name="Lapidus A."/>
            <person name="Barry K."/>
            <person name="Detter J.C."/>
            <person name="Glavina del Rio T."/>
            <person name="Hammon N."/>
            <person name="Israni S."/>
            <person name="Pitluck S."/>
            <person name="Chain P."/>
            <person name="Malfatti S."/>
            <person name="Shin M."/>
            <person name="Vergez L."/>
            <person name="Schmutz J."/>
            <person name="Larimer F."/>
            <person name="Land M."/>
            <person name="Hauser L."/>
            <person name="Kyrpides N."/>
            <person name="Kim E."/>
            <person name="LiPuma J.J."/>
            <person name="Gonzalez C.F."/>
            <person name="Konstantinidis K."/>
            <person name="Tiedje J.M."/>
            <person name="Richardson P."/>
        </authorList>
    </citation>
    <scope>NUCLEOTIDE SEQUENCE [LARGE SCALE GENOMIC DNA]</scope>
    <source>
        <strain>HI2424</strain>
    </source>
</reference>
<organism>
    <name type="scientific">Burkholderia cenocepacia (strain HI2424)</name>
    <dbReference type="NCBI Taxonomy" id="331272"/>
    <lineage>
        <taxon>Bacteria</taxon>
        <taxon>Pseudomonadati</taxon>
        <taxon>Pseudomonadota</taxon>
        <taxon>Betaproteobacteria</taxon>
        <taxon>Burkholderiales</taxon>
        <taxon>Burkholderiaceae</taxon>
        <taxon>Burkholderia</taxon>
        <taxon>Burkholderia cepacia complex</taxon>
    </lineage>
</organism>